<evidence type="ECO:0000255" key="1">
    <source>
        <dbReference type="HAMAP-Rule" id="MF_01315"/>
    </source>
</evidence>
<evidence type="ECO:0000256" key="2">
    <source>
        <dbReference type="SAM" id="MobiDB-lite"/>
    </source>
</evidence>
<evidence type="ECO:0000305" key="3"/>
<feature type="chain" id="PRO_0000230487" description="Small ribosomal subunit protein uS13">
    <location>
        <begin position="1"/>
        <end position="121"/>
    </location>
</feature>
<feature type="region of interest" description="Disordered" evidence="2">
    <location>
        <begin position="92"/>
        <end position="121"/>
    </location>
</feature>
<proteinExistence type="inferred from homology"/>
<gene>
    <name evidence="1" type="primary">rpsM</name>
    <name type="ordered locus">Bcep18194_A3470</name>
</gene>
<dbReference type="EMBL" id="CP000151">
    <property type="protein sequence ID" value="ABB07072.1"/>
    <property type="molecule type" value="Genomic_DNA"/>
</dbReference>
<dbReference type="RefSeq" id="WP_006477178.1">
    <property type="nucleotide sequence ID" value="NZ_WNDV01000034.1"/>
</dbReference>
<dbReference type="SMR" id="Q39KE4"/>
<dbReference type="GeneID" id="93193428"/>
<dbReference type="KEGG" id="bur:Bcep18194_A3470"/>
<dbReference type="HOGENOM" id="CLU_103849_1_2_4"/>
<dbReference type="Proteomes" id="UP000002705">
    <property type="component" value="Chromosome 1"/>
</dbReference>
<dbReference type="GO" id="GO:0005829">
    <property type="term" value="C:cytosol"/>
    <property type="evidence" value="ECO:0007669"/>
    <property type="project" value="TreeGrafter"/>
</dbReference>
<dbReference type="GO" id="GO:0015935">
    <property type="term" value="C:small ribosomal subunit"/>
    <property type="evidence" value="ECO:0007669"/>
    <property type="project" value="TreeGrafter"/>
</dbReference>
<dbReference type="GO" id="GO:0019843">
    <property type="term" value="F:rRNA binding"/>
    <property type="evidence" value="ECO:0007669"/>
    <property type="project" value="UniProtKB-UniRule"/>
</dbReference>
<dbReference type="GO" id="GO:0003735">
    <property type="term" value="F:structural constituent of ribosome"/>
    <property type="evidence" value="ECO:0007669"/>
    <property type="project" value="InterPro"/>
</dbReference>
<dbReference type="GO" id="GO:0000049">
    <property type="term" value="F:tRNA binding"/>
    <property type="evidence" value="ECO:0007669"/>
    <property type="project" value="UniProtKB-UniRule"/>
</dbReference>
<dbReference type="GO" id="GO:0006412">
    <property type="term" value="P:translation"/>
    <property type="evidence" value="ECO:0007669"/>
    <property type="project" value="UniProtKB-UniRule"/>
</dbReference>
<dbReference type="FunFam" id="1.10.8.50:FF:000001">
    <property type="entry name" value="30S ribosomal protein S13"/>
    <property type="match status" value="1"/>
</dbReference>
<dbReference type="FunFam" id="4.10.910.10:FF:000001">
    <property type="entry name" value="30S ribosomal protein S13"/>
    <property type="match status" value="1"/>
</dbReference>
<dbReference type="Gene3D" id="1.10.8.50">
    <property type="match status" value="1"/>
</dbReference>
<dbReference type="Gene3D" id="4.10.910.10">
    <property type="entry name" value="30s ribosomal protein s13, domain 2"/>
    <property type="match status" value="1"/>
</dbReference>
<dbReference type="HAMAP" id="MF_01315">
    <property type="entry name" value="Ribosomal_uS13"/>
    <property type="match status" value="1"/>
</dbReference>
<dbReference type="InterPro" id="IPR027437">
    <property type="entry name" value="Rbsml_uS13_C"/>
</dbReference>
<dbReference type="InterPro" id="IPR001892">
    <property type="entry name" value="Ribosomal_uS13"/>
</dbReference>
<dbReference type="InterPro" id="IPR010979">
    <property type="entry name" value="Ribosomal_uS13-like_H2TH"/>
</dbReference>
<dbReference type="InterPro" id="IPR019980">
    <property type="entry name" value="Ribosomal_uS13_bac-type"/>
</dbReference>
<dbReference type="InterPro" id="IPR018269">
    <property type="entry name" value="Ribosomal_uS13_CS"/>
</dbReference>
<dbReference type="NCBIfam" id="TIGR03631">
    <property type="entry name" value="uS13_bact"/>
    <property type="match status" value="1"/>
</dbReference>
<dbReference type="PANTHER" id="PTHR10871">
    <property type="entry name" value="30S RIBOSOMAL PROTEIN S13/40S RIBOSOMAL PROTEIN S18"/>
    <property type="match status" value="1"/>
</dbReference>
<dbReference type="PANTHER" id="PTHR10871:SF1">
    <property type="entry name" value="SMALL RIBOSOMAL SUBUNIT PROTEIN US13M"/>
    <property type="match status" value="1"/>
</dbReference>
<dbReference type="Pfam" id="PF00416">
    <property type="entry name" value="Ribosomal_S13"/>
    <property type="match status" value="1"/>
</dbReference>
<dbReference type="PIRSF" id="PIRSF002134">
    <property type="entry name" value="Ribosomal_S13"/>
    <property type="match status" value="1"/>
</dbReference>
<dbReference type="SUPFAM" id="SSF46946">
    <property type="entry name" value="S13-like H2TH domain"/>
    <property type="match status" value="1"/>
</dbReference>
<dbReference type="PROSITE" id="PS00646">
    <property type="entry name" value="RIBOSOMAL_S13_1"/>
    <property type="match status" value="1"/>
</dbReference>
<dbReference type="PROSITE" id="PS50159">
    <property type="entry name" value="RIBOSOMAL_S13_2"/>
    <property type="match status" value="1"/>
</dbReference>
<organism>
    <name type="scientific">Burkholderia lata (strain ATCC 17760 / DSM 23089 / LMG 22485 / NCIMB 9086 / R18194 / 383)</name>
    <dbReference type="NCBI Taxonomy" id="482957"/>
    <lineage>
        <taxon>Bacteria</taxon>
        <taxon>Pseudomonadati</taxon>
        <taxon>Pseudomonadota</taxon>
        <taxon>Betaproteobacteria</taxon>
        <taxon>Burkholderiales</taxon>
        <taxon>Burkholderiaceae</taxon>
        <taxon>Burkholderia</taxon>
        <taxon>Burkholderia cepacia complex</taxon>
    </lineage>
</organism>
<protein>
    <recommendedName>
        <fullName evidence="1">Small ribosomal subunit protein uS13</fullName>
    </recommendedName>
    <alternativeName>
        <fullName evidence="3">30S ribosomal protein S13</fullName>
    </alternativeName>
</protein>
<accession>Q39KE4</accession>
<reference key="1">
    <citation type="submission" date="2005-10" db="EMBL/GenBank/DDBJ databases">
        <title>Complete sequence of chromosome 1 of Burkholderia sp. 383.</title>
        <authorList>
            <consortium name="US DOE Joint Genome Institute"/>
            <person name="Copeland A."/>
            <person name="Lucas S."/>
            <person name="Lapidus A."/>
            <person name="Barry K."/>
            <person name="Detter J.C."/>
            <person name="Glavina T."/>
            <person name="Hammon N."/>
            <person name="Israni S."/>
            <person name="Pitluck S."/>
            <person name="Chain P."/>
            <person name="Malfatti S."/>
            <person name="Shin M."/>
            <person name="Vergez L."/>
            <person name="Schmutz J."/>
            <person name="Larimer F."/>
            <person name="Land M."/>
            <person name="Kyrpides N."/>
            <person name="Lykidis A."/>
            <person name="Richardson P."/>
        </authorList>
    </citation>
    <scope>NUCLEOTIDE SEQUENCE [LARGE SCALE GENOMIC DNA]</scope>
    <source>
        <strain>ATCC 17760 / DSM 23089 / LMG 22485 / NCIMB 9086 / R18194 / 383</strain>
    </source>
</reference>
<sequence>MARIAGVNIPNHQHTEIGLTAIFGVGRTRSRSICVAAGVDFSKKVKDLTDADLEKLREEVGKFVVEGDLRREVTMNIKRLMDLGCYRGVRHRKGLPMRGQRTRTNARTRKGPRRAAQALKK</sequence>
<keyword id="KW-0687">Ribonucleoprotein</keyword>
<keyword id="KW-0689">Ribosomal protein</keyword>
<keyword id="KW-0694">RNA-binding</keyword>
<keyword id="KW-0699">rRNA-binding</keyword>
<keyword id="KW-0820">tRNA-binding</keyword>
<name>RS13_BURL3</name>
<comment type="function">
    <text evidence="1">Located at the top of the head of the 30S subunit, it contacts several helices of the 16S rRNA. In the 70S ribosome it contacts the 23S rRNA (bridge B1a) and protein L5 of the 50S subunit (bridge B1b), connecting the 2 subunits; these bridges are implicated in subunit movement. Contacts the tRNAs in the A and P-sites.</text>
</comment>
<comment type="subunit">
    <text evidence="1">Part of the 30S ribosomal subunit. Forms a loose heterodimer with protein S19. Forms two bridges to the 50S subunit in the 70S ribosome.</text>
</comment>
<comment type="similarity">
    <text evidence="1">Belongs to the universal ribosomal protein uS13 family.</text>
</comment>